<gene>
    <name evidence="1" type="primary">lig</name>
    <name type="ordered locus">SGR_6320</name>
</gene>
<sequence length="511" mass="54767">MLLAELAQVSLEVAATSARSRKTALLAGLFRNAGPEDVPVVIPYLAGRLPQGRIGVGWRSLGEPVEPACDPTLTVTGVDAELTALAATSGPGSQARRRERLRTLFAAATADEQRFLRALLTGEVRQGALDAVAADALAHAAGAPPADVRRAVMLAGSLQDVATVLLADGPGALADFRLTVGRPVQPMLARSAASVGEALDKLGPCAVEEKLDGIRVQVHRDGERIRAYTRTLDDITDRLPELVSAVAALHARRFVLDGELIALGEDGRPRPFQETASRVGSRRDVAGAAAHVPVVPVFFDALRVDGEDLLDRPFADRHAALARLLPDDLRVRRTVVADPDAPEARAAADAFLAATLERGHEGVVVKDLAAAYSAGRRGASWLKVKPVHTLDLVVLAVERGSGRRTGKLSNLHLGARRPDGTFAMLGKTFKGLTDALLDWQTARLRELATDDDGHVVTVRPELVVEIAYDGLQRSTRYPAGVTLRFARVLRYREDKTAREADTVETVLSRQR</sequence>
<comment type="function">
    <text evidence="1">DNA ligase that seals nicks in double-stranded DNA during DNA replication, DNA recombination and DNA repair.</text>
</comment>
<comment type="catalytic activity">
    <reaction evidence="1">
        <text>ATP + (deoxyribonucleotide)n-3'-hydroxyl + 5'-phospho-(deoxyribonucleotide)m = (deoxyribonucleotide)n+m + AMP + diphosphate.</text>
        <dbReference type="EC" id="6.5.1.1"/>
    </reaction>
</comment>
<comment type="cofactor">
    <cofactor evidence="1">
        <name>Mg(2+)</name>
        <dbReference type="ChEBI" id="CHEBI:18420"/>
    </cofactor>
</comment>
<comment type="similarity">
    <text evidence="1">Belongs to the ATP-dependent DNA ligase family.</text>
</comment>
<organism>
    <name type="scientific">Streptomyces griseus subsp. griseus (strain JCM 4626 / CBS 651.72 / NBRC 13350 / KCC S-0626 / ISP 5235)</name>
    <dbReference type="NCBI Taxonomy" id="455632"/>
    <lineage>
        <taxon>Bacteria</taxon>
        <taxon>Bacillati</taxon>
        <taxon>Actinomycetota</taxon>
        <taxon>Actinomycetes</taxon>
        <taxon>Kitasatosporales</taxon>
        <taxon>Streptomycetaceae</taxon>
        <taxon>Streptomyces</taxon>
    </lineage>
</organism>
<reference key="1">
    <citation type="journal article" date="2008" name="J. Bacteriol.">
        <title>Genome sequence of the streptomycin-producing microorganism Streptomyces griseus IFO 13350.</title>
        <authorList>
            <person name="Ohnishi Y."/>
            <person name="Ishikawa J."/>
            <person name="Hara H."/>
            <person name="Suzuki H."/>
            <person name="Ikenoya M."/>
            <person name="Ikeda H."/>
            <person name="Yamashita A."/>
            <person name="Hattori M."/>
            <person name="Horinouchi S."/>
        </authorList>
    </citation>
    <scope>NUCLEOTIDE SEQUENCE [LARGE SCALE GENOMIC DNA]</scope>
    <source>
        <strain>JCM 4626 / CBS 651.72 / NBRC 13350 / KCC S-0626 / ISP 5235</strain>
    </source>
</reference>
<proteinExistence type="inferred from homology"/>
<keyword id="KW-0067">ATP-binding</keyword>
<keyword id="KW-0131">Cell cycle</keyword>
<keyword id="KW-0132">Cell division</keyword>
<keyword id="KW-0227">DNA damage</keyword>
<keyword id="KW-0233">DNA recombination</keyword>
<keyword id="KW-0234">DNA repair</keyword>
<keyword id="KW-0235">DNA replication</keyword>
<keyword id="KW-0436">Ligase</keyword>
<keyword id="KW-0460">Magnesium</keyword>
<keyword id="KW-0479">Metal-binding</keyword>
<keyword id="KW-0547">Nucleotide-binding</keyword>
<dbReference type="EC" id="6.5.1.1" evidence="1"/>
<dbReference type="EMBL" id="AP009493">
    <property type="protein sequence ID" value="BAG23149.1"/>
    <property type="molecule type" value="Genomic_DNA"/>
</dbReference>
<dbReference type="RefSeq" id="WP_012381855.1">
    <property type="nucleotide sequence ID" value="NC_010572.1"/>
</dbReference>
<dbReference type="SMR" id="B1W5J2"/>
<dbReference type="KEGG" id="sgr:SGR_6320"/>
<dbReference type="PATRIC" id="fig|455632.4.peg.6478"/>
<dbReference type="eggNOG" id="COG1793">
    <property type="taxonomic scope" value="Bacteria"/>
</dbReference>
<dbReference type="HOGENOM" id="CLU_005138_6_1_11"/>
<dbReference type="Proteomes" id="UP000001685">
    <property type="component" value="Chromosome"/>
</dbReference>
<dbReference type="GO" id="GO:0005524">
    <property type="term" value="F:ATP binding"/>
    <property type="evidence" value="ECO:0007669"/>
    <property type="project" value="UniProtKB-UniRule"/>
</dbReference>
<dbReference type="GO" id="GO:0003677">
    <property type="term" value="F:DNA binding"/>
    <property type="evidence" value="ECO:0007669"/>
    <property type="project" value="InterPro"/>
</dbReference>
<dbReference type="GO" id="GO:0003910">
    <property type="term" value="F:DNA ligase (ATP) activity"/>
    <property type="evidence" value="ECO:0007669"/>
    <property type="project" value="UniProtKB-UniRule"/>
</dbReference>
<dbReference type="GO" id="GO:0046872">
    <property type="term" value="F:metal ion binding"/>
    <property type="evidence" value="ECO:0007669"/>
    <property type="project" value="UniProtKB-KW"/>
</dbReference>
<dbReference type="GO" id="GO:0051301">
    <property type="term" value="P:cell division"/>
    <property type="evidence" value="ECO:0007669"/>
    <property type="project" value="UniProtKB-KW"/>
</dbReference>
<dbReference type="GO" id="GO:0071897">
    <property type="term" value="P:DNA biosynthetic process"/>
    <property type="evidence" value="ECO:0007669"/>
    <property type="project" value="InterPro"/>
</dbReference>
<dbReference type="GO" id="GO:0006310">
    <property type="term" value="P:DNA recombination"/>
    <property type="evidence" value="ECO:0007669"/>
    <property type="project" value="UniProtKB-UniRule"/>
</dbReference>
<dbReference type="GO" id="GO:0006281">
    <property type="term" value="P:DNA repair"/>
    <property type="evidence" value="ECO:0007669"/>
    <property type="project" value="UniProtKB-UniRule"/>
</dbReference>
<dbReference type="GO" id="GO:0006260">
    <property type="term" value="P:DNA replication"/>
    <property type="evidence" value="ECO:0007669"/>
    <property type="project" value="UniProtKB-UniRule"/>
</dbReference>
<dbReference type="CDD" id="cd07901">
    <property type="entry name" value="Adenylation_DNA_ligase_Arch_LigB"/>
    <property type="match status" value="1"/>
</dbReference>
<dbReference type="FunFam" id="2.40.50.140:FF:000163">
    <property type="entry name" value="Probable DNA ligase"/>
    <property type="match status" value="1"/>
</dbReference>
<dbReference type="Gene3D" id="1.10.3260.10">
    <property type="entry name" value="DNA ligase, ATP-dependent, N-terminal domain"/>
    <property type="match status" value="1"/>
</dbReference>
<dbReference type="Gene3D" id="3.30.470.30">
    <property type="entry name" value="DNA ligase/mRNA capping enzyme"/>
    <property type="match status" value="1"/>
</dbReference>
<dbReference type="Gene3D" id="2.40.50.140">
    <property type="entry name" value="Nucleic acid-binding proteins"/>
    <property type="match status" value="1"/>
</dbReference>
<dbReference type="HAMAP" id="MF_00407">
    <property type="entry name" value="DNA_ligase"/>
    <property type="match status" value="1"/>
</dbReference>
<dbReference type="InterPro" id="IPR050191">
    <property type="entry name" value="ATP-dep_DNA_ligase"/>
</dbReference>
<dbReference type="InterPro" id="IPR022865">
    <property type="entry name" value="DNA_ligae_ATP-dep_bac/arc"/>
</dbReference>
<dbReference type="InterPro" id="IPR000977">
    <property type="entry name" value="DNA_ligase_ATP-dep"/>
</dbReference>
<dbReference type="InterPro" id="IPR012309">
    <property type="entry name" value="DNA_ligase_ATP-dep_C"/>
</dbReference>
<dbReference type="InterPro" id="IPR012310">
    <property type="entry name" value="DNA_ligase_ATP-dep_cent"/>
</dbReference>
<dbReference type="InterPro" id="IPR016059">
    <property type="entry name" value="DNA_ligase_ATP-dep_CS"/>
</dbReference>
<dbReference type="InterPro" id="IPR012308">
    <property type="entry name" value="DNA_ligase_ATP-dep_N"/>
</dbReference>
<dbReference type="InterPro" id="IPR036599">
    <property type="entry name" value="DNA_ligase_N_sf"/>
</dbReference>
<dbReference type="InterPro" id="IPR012340">
    <property type="entry name" value="NA-bd_OB-fold"/>
</dbReference>
<dbReference type="NCBIfam" id="TIGR00574">
    <property type="entry name" value="dnl1"/>
    <property type="match status" value="1"/>
</dbReference>
<dbReference type="NCBIfam" id="NF002868">
    <property type="entry name" value="PRK03180.1"/>
    <property type="match status" value="1"/>
</dbReference>
<dbReference type="PANTHER" id="PTHR45674">
    <property type="entry name" value="DNA LIGASE 1/3 FAMILY MEMBER"/>
    <property type="match status" value="1"/>
</dbReference>
<dbReference type="PANTHER" id="PTHR45674:SF13">
    <property type="entry name" value="DNA LIGASE-RELATED"/>
    <property type="match status" value="1"/>
</dbReference>
<dbReference type="Pfam" id="PF04679">
    <property type="entry name" value="DNA_ligase_A_C"/>
    <property type="match status" value="1"/>
</dbReference>
<dbReference type="Pfam" id="PF01068">
    <property type="entry name" value="DNA_ligase_A_M"/>
    <property type="match status" value="1"/>
</dbReference>
<dbReference type="Pfam" id="PF04675">
    <property type="entry name" value="DNA_ligase_A_N"/>
    <property type="match status" value="1"/>
</dbReference>
<dbReference type="SUPFAM" id="SSF117018">
    <property type="entry name" value="ATP-dependent DNA ligase DNA-binding domain"/>
    <property type="match status" value="1"/>
</dbReference>
<dbReference type="SUPFAM" id="SSF56091">
    <property type="entry name" value="DNA ligase/mRNA capping enzyme, catalytic domain"/>
    <property type="match status" value="1"/>
</dbReference>
<dbReference type="SUPFAM" id="SSF50249">
    <property type="entry name" value="Nucleic acid-binding proteins"/>
    <property type="match status" value="1"/>
</dbReference>
<dbReference type="PROSITE" id="PS00697">
    <property type="entry name" value="DNA_LIGASE_A1"/>
    <property type="match status" value="1"/>
</dbReference>
<dbReference type="PROSITE" id="PS50160">
    <property type="entry name" value="DNA_LIGASE_A3"/>
    <property type="match status" value="1"/>
</dbReference>
<evidence type="ECO:0000255" key="1">
    <source>
        <dbReference type="HAMAP-Rule" id="MF_00407"/>
    </source>
</evidence>
<feature type="chain" id="PRO_0000365241" description="Probable DNA ligase">
    <location>
        <begin position="1"/>
        <end position="511"/>
    </location>
</feature>
<feature type="active site" description="N6-AMP-lysine intermediate" evidence="1">
    <location>
        <position position="210"/>
    </location>
</feature>
<feature type="binding site" evidence="1">
    <location>
        <position position="208"/>
    </location>
    <ligand>
        <name>ATP</name>
        <dbReference type="ChEBI" id="CHEBI:30616"/>
    </ligand>
</feature>
<feature type="binding site" evidence="1">
    <location>
        <position position="215"/>
    </location>
    <ligand>
        <name>ATP</name>
        <dbReference type="ChEBI" id="CHEBI:30616"/>
    </ligand>
</feature>
<feature type="binding site" evidence="1">
    <location>
        <position position="230"/>
    </location>
    <ligand>
        <name>ATP</name>
        <dbReference type="ChEBI" id="CHEBI:30616"/>
    </ligand>
</feature>
<feature type="binding site" evidence="1">
    <location>
        <position position="259"/>
    </location>
    <ligand>
        <name>ATP</name>
        <dbReference type="ChEBI" id="CHEBI:30616"/>
    </ligand>
</feature>
<feature type="binding site" evidence="1">
    <location>
        <position position="299"/>
    </location>
    <ligand>
        <name>ATP</name>
        <dbReference type="ChEBI" id="CHEBI:30616"/>
    </ligand>
</feature>
<feature type="binding site" evidence="1">
    <location>
        <position position="377"/>
    </location>
    <ligand>
        <name>ATP</name>
        <dbReference type="ChEBI" id="CHEBI:30616"/>
    </ligand>
</feature>
<feature type="binding site" evidence="1">
    <location>
        <position position="383"/>
    </location>
    <ligand>
        <name>ATP</name>
        <dbReference type="ChEBI" id="CHEBI:30616"/>
    </ligand>
</feature>
<protein>
    <recommendedName>
        <fullName evidence="1">Probable DNA ligase</fullName>
        <ecNumber evidence="1">6.5.1.1</ecNumber>
    </recommendedName>
    <alternativeName>
        <fullName evidence="1">Polydeoxyribonucleotide synthase [ATP]</fullName>
    </alternativeName>
</protein>
<name>DNLI_STRGG</name>
<accession>B1W5J2</accession>